<proteinExistence type="evidence at protein level"/>
<organism>
    <name type="scientific">Mycolicibacterium smegmatis (strain ATCC 700084 / mc(2)155)</name>
    <name type="common">Mycobacterium smegmatis</name>
    <dbReference type="NCBI Taxonomy" id="246196"/>
    <lineage>
        <taxon>Bacteria</taxon>
        <taxon>Bacillati</taxon>
        <taxon>Actinomycetota</taxon>
        <taxon>Actinomycetes</taxon>
        <taxon>Mycobacteriales</taxon>
        <taxon>Mycobacteriaceae</taxon>
        <taxon>Mycolicibacterium</taxon>
    </lineage>
</organism>
<accession>Q9F868</accession>
<accession>A0QR02</accession>
<accession>I7G4G1</accession>
<dbReference type="EMBL" id="AF258346">
    <property type="protein sequence ID" value="AAG09797.1"/>
    <property type="molecule type" value="Genomic_DNA"/>
</dbReference>
<dbReference type="EMBL" id="CP000480">
    <property type="protein sequence ID" value="ABK72892.1"/>
    <property type="molecule type" value="Genomic_DNA"/>
</dbReference>
<dbReference type="EMBL" id="CP001663">
    <property type="protein sequence ID" value="AFP37394.1"/>
    <property type="molecule type" value="Genomic_DNA"/>
</dbReference>
<dbReference type="RefSeq" id="YP_885340.1">
    <property type="nucleotide sequence ID" value="NC_008596.1"/>
</dbReference>
<dbReference type="SMR" id="Q9F868"/>
<dbReference type="STRING" id="246196.MSMEG_0937"/>
<dbReference type="PaxDb" id="246196-MSMEI_0914"/>
<dbReference type="KEGG" id="msb:LJ00_04650"/>
<dbReference type="KEGG" id="msg:MSMEI_0914"/>
<dbReference type="KEGG" id="msm:MSMEG_0937"/>
<dbReference type="PATRIC" id="fig|246196.19.peg.927"/>
<dbReference type="eggNOG" id="COG0745">
    <property type="taxonomic scope" value="Bacteria"/>
</dbReference>
<dbReference type="OrthoDB" id="4481605at2"/>
<dbReference type="Proteomes" id="UP000000757">
    <property type="component" value="Chromosome"/>
</dbReference>
<dbReference type="Proteomes" id="UP000006158">
    <property type="component" value="Chromosome"/>
</dbReference>
<dbReference type="GO" id="GO:0005829">
    <property type="term" value="C:cytosol"/>
    <property type="evidence" value="ECO:0007669"/>
    <property type="project" value="TreeGrafter"/>
</dbReference>
<dbReference type="GO" id="GO:0032993">
    <property type="term" value="C:protein-DNA complex"/>
    <property type="evidence" value="ECO:0007669"/>
    <property type="project" value="TreeGrafter"/>
</dbReference>
<dbReference type="GO" id="GO:0000156">
    <property type="term" value="F:phosphorelay response regulator activity"/>
    <property type="evidence" value="ECO:0007669"/>
    <property type="project" value="TreeGrafter"/>
</dbReference>
<dbReference type="GO" id="GO:0000976">
    <property type="term" value="F:transcription cis-regulatory region binding"/>
    <property type="evidence" value="ECO:0007669"/>
    <property type="project" value="TreeGrafter"/>
</dbReference>
<dbReference type="GO" id="GO:0006355">
    <property type="term" value="P:regulation of DNA-templated transcription"/>
    <property type="evidence" value="ECO:0007669"/>
    <property type="project" value="InterPro"/>
</dbReference>
<dbReference type="CDD" id="cd17621">
    <property type="entry name" value="REC_OmpR_RegX3-like"/>
    <property type="match status" value="1"/>
</dbReference>
<dbReference type="CDD" id="cd00383">
    <property type="entry name" value="trans_reg_C"/>
    <property type="match status" value="1"/>
</dbReference>
<dbReference type="FunFam" id="3.40.50.2300:FF:000001">
    <property type="entry name" value="DNA-binding response regulator PhoB"/>
    <property type="match status" value="1"/>
</dbReference>
<dbReference type="FunFam" id="1.10.10.10:FF:000110">
    <property type="entry name" value="DNA-binding response regulator RegX3"/>
    <property type="match status" value="1"/>
</dbReference>
<dbReference type="Gene3D" id="3.40.50.2300">
    <property type="match status" value="1"/>
</dbReference>
<dbReference type="Gene3D" id="6.10.250.690">
    <property type="match status" value="1"/>
</dbReference>
<dbReference type="Gene3D" id="1.10.10.10">
    <property type="entry name" value="Winged helix-like DNA-binding domain superfamily/Winged helix DNA-binding domain"/>
    <property type="match status" value="1"/>
</dbReference>
<dbReference type="InterPro" id="IPR011006">
    <property type="entry name" value="CheY-like_superfamily"/>
</dbReference>
<dbReference type="InterPro" id="IPR001867">
    <property type="entry name" value="OmpR/PhoB-type_DNA-bd"/>
</dbReference>
<dbReference type="InterPro" id="IPR016032">
    <property type="entry name" value="Sig_transdc_resp-reg_C-effctor"/>
</dbReference>
<dbReference type="InterPro" id="IPR001789">
    <property type="entry name" value="Sig_transdc_resp-reg_receiver"/>
</dbReference>
<dbReference type="InterPro" id="IPR039420">
    <property type="entry name" value="WalR-like"/>
</dbReference>
<dbReference type="InterPro" id="IPR036388">
    <property type="entry name" value="WH-like_DNA-bd_sf"/>
</dbReference>
<dbReference type="PANTHER" id="PTHR48111">
    <property type="entry name" value="REGULATOR OF RPOS"/>
    <property type="match status" value="1"/>
</dbReference>
<dbReference type="PANTHER" id="PTHR48111:SF72">
    <property type="entry name" value="SENSORY TRANSDUCTION PROTEIN REGX3"/>
    <property type="match status" value="1"/>
</dbReference>
<dbReference type="Pfam" id="PF00072">
    <property type="entry name" value="Response_reg"/>
    <property type="match status" value="1"/>
</dbReference>
<dbReference type="Pfam" id="PF00486">
    <property type="entry name" value="Trans_reg_C"/>
    <property type="match status" value="1"/>
</dbReference>
<dbReference type="SMART" id="SM00448">
    <property type="entry name" value="REC"/>
    <property type="match status" value="1"/>
</dbReference>
<dbReference type="SMART" id="SM00862">
    <property type="entry name" value="Trans_reg_C"/>
    <property type="match status" value="1"/>
</dbReference>
<dbReference type="SUPFAM" id="SSF46894">
    <property type="entry name" value="C-terminal effector domain of the bipartite response regulators"/>
    <property type="match status" value="1"/>
</dbReference>
<dbReference type="SUPFAM" id="SSF52172">
    <property type="entry name" value="CheY-like"/>
    <property type="match status" value="1"/>
</dbReference>
<dbReference type="PROSITE" id="PS51755">
    <property type="entry name" value="OMPR_PHOB"/>
    <property type="match status" value="1"/>
</dbReference>
<dbReference type="PROSITE" id="PS50110">
    <property type="entry name" value="RESPONSE_REGULATORY"/>
    <property type="match status" value="1"/>
</dbReference>
<gene>
    <name evidence="6" type="primary">regX3</name>
    <name type="ordered locus">MSMEG_0937</name>
    <name type="ordered locus">MSMEI_0914</name>
</gene>
<feature type="chain" id="PRO_0000081333" description="Sensory transduction protein RegX3">
    <location>
        <begin position="1"/>
        <end position="228"/>
    </location>
</feature>
<feature type="domain" description="Response regulatory" evidence="1">
    <location>
        <begin position="3"/>
        <end position="116"/>
    </location>
</feature>
<feature type="DNA-binding region" description="OmpR/PhoB-type" evidence="2">
    <location>
        <begin position="129"/>
        <end position="228"/>
    </location>
</feature>
<feature type="modified residue" description="4-aspartylphosphate" evidence="1">
    <location>
        <position position="52"/>
    </location>
</feature>
<feature type="mutagenesis site" description="Cannot bind DNA." evidence="3">
    <original>D</original>
    <variation>N</variation>
    <location>
        <position position="52"/>
    </location>
</feature>
<keyword id="KW-0010">Activator</keyword>
<keyword id="KW-0238">DNA-binding</keyword>
<keyword id="KW-0597">Phosphoprotein</keyword>
<keyword id="KW-1185">Reference proteome</keyword>
<keyword id="KW-0346">Stress response</keyword>
<keyword id="KW-0804">Transcription</keyword>
<keyword id="KW-0805">Transcription regulation</keyword>
<keyword id="KW-0902">Two-component regulatory system</keyword>
<protein>
    <recommendedName>
        <fullName evidence="7">Sensory transduction protein RegX3</fullName>
    </recommendedName>
</protein>
<evidence type="ECO:0000255" key="1">
    <source>
        <dbReference type="PROSITE-ProRule" id="PRU00169"/>
    </source>
</evidence>
<evidence type="ECO:0000255" key="2">
    <source>
        <dbReference type="PROSITE-ProRule" id="PRU01091"/>
    </source>
</evidence>
<evidence type="ECO:0000269" key="3">
    <source>
    </source>
</evidence>
<evidence type="ECO:0000269" key="4">
    <source>
    </source>
</evidence>
<evidence type="ECO:0000269" key="5">
    <source>
    </source>
</evidence>
<evidence type="ECO:0000303" key="6">
    <source>
    </source>
</evidence>
<evidence type="ECO:0000305" key="7"/>
<reference key="1">
    <citation type="submission" date="2000-04" db="EMBL/GenBank/DDBJ databases">
        <authorList>
            <person name="Harris R.H."/>
            <person name="Benjamin W.H. Jr."/>
            <person name="Briles D.E."/>
            <person name="Dunlap N.E."/>
        </authorList>
    </citation>
    <scope>NUCLEOTIDE SEQUENCE [GENOMIC DNA]</scope>
</reference>
<reference key="2">
    <citation type="submission" date="2006-10" db="EMBL/GenBank/DDBJ databases">
        <authorList>
            <person name="Fleischmann R.D."/>
            <person name="Dodson R.J."/>
            <person name="Haft D.H."/>
            <person name="Merkel J.S."/>
            <person name="Nelson W.C."/>
            <person name="Fraser C.M."/>
        </authorList>
    </citation>
    <scope>NUCLEOTIDE SEQUENCE [LARGE SCALE GENOMIC DNA]</scope>
    <source>
        <strain>ATCC 700084 / mc(2)155</strain>
    </source>
</reference>
<reference key="3">
    <citation type="journal article" date="2007" name="Genome Biol.">
        <title>Interrupted coding sequences in Mycobacterium smegmatis: authentic mutations or sequencing errors?</title>
        <authorList>
            <person name="Deshayes C."/>
            <person name="Perrodou E."/>
            <person name="Gallien S."/>
            <person name="Euphrasie D."/>
            <person name="Schaeffer C."/>
            <person name="Van-Dorsselaer A."/>
            <person name="Poch O."/>
            <person name="Lecompte O."/>
            <person name="Reyrat J.-M."/>
        </authorList>
    </citation>
    <scope>NUCLEOTIDE SEQUENCE [LARGE SCALE GENOMIC DNA]</scope>
    <source>
        <strain>ATCC 700084 / mc(2)155</strain>
    </source>
</reference>
<reference key="4">
    <citation type="journal article" date="2009" name="Genome Res.">
        <title>Ortho-proteogenomics: multiple proteomes investigation through orthology and a new MS-based protocol.</title>
        <authorList>
            <person name="Gallien S."/>
            <person name="Perrodou E."/>
            <person name="Carapito C."/>
            <person name="Deshayes C."/>
            <person name="Reyrat J.-M."/>
            <person name="Van Dorsselaer A."/>
            <person name="Poch O."/>
            <person name="Schaeffer C."/>
            <person name="Lecompte O."/>
        </authorList>
    </citation>
    <scope>NUCLEOTIDE SEQUENCE [LARGE SCALE GENOMIC DNA]</scope>
    <source>
        <strain>ATCC 700084 / mc(2)155</strain>
    </source>
</reference>
<reference key="5">
    <citation type="journal article" date="2007" name="J. Bacteriol.">
        <title>The two-component regulatory system senX3-regX3 regulates phosphate-dependent gene expression in Mycobacterium smegmatis.</title>
        <authorList>
            <person name="Glover R.T."/>
            <person name="Kriakov J."/>
            <person name="Garforth S.J."/>
            <person name="Baughn A.D."/>
            <person name="Jacobs W.R. Jr."/>
        </authorList>
    </citation>
    <scope>FUNCTION IN REGULATION OF PHOSPHATE-DEPENDENT GENE EXPRESSION</scope>
    <scope>DNA-BINDING</scope>
    <scope>PHOSPHORYLATION</scope>
    <scope>DISRUPTION PHENOTYPE</scope>
    <scope>MUTAGENESIS OF ASP-52</scope>
    <source>
        <strain>ATCC 700084 / mc(2)155</strain>
    </source>
</reference>
<reference key="6">
    <citation type="journal article" date="2008" name="J. Bacteriol.">
        <title>Differential regulation of high-affinity phosphate transport systems of Mycobacterium smegmatis: identification of PhnF, a repressor of the phnDCE operon.</title>
        <authorList>
            <person name="Gebhard S."/>
            <person name="Cook G.M."/>
        </authorList>
    </citation>
    <scope>FUNCTION</scope>
    <scope>REGULATION OF PHNDCE OPERON AND PHNF</scope>
    <scope>INDUCTION</scope>
    <source>
        <strain>ATCC 700084 / mc(2)155</strain>
    </source>
</reference>
<reference key="7">
    <citation type="journal article" date="2012" name="Microbiology">
        <title>Deletion of SenX3-RegX3, a key two-component regulatory system of Mycobacterium smegmatis, results in growth defects under phosphate-limiting conditions.</title>
        <authorList>
            <person name="James J.N."/>
            <person name="Hasan Z.U."/>
            <person name="Ioerger T.R."/>
            <person name="Brown A.C."/>
            <person name="Personne Y."/>
            <person name="Carroll P."/>
            <person name="Ikeh M."/>
            <person name="Tilston-Lunel N.L."/>
            <person name="Palavecino C."/>
            <person name="Sacchettini J.C."/>
            <person name="Parish T."/>
        </authorList>
    </citation>
    <scope>FUNCTION</scope>
    <scope>DISRUPTION PHENOTYPE</scope>
    <source>
        <strain>ATCC 700084 / mc(2)155</strain>
    </source>
</reference>
<comment type="function">
    <text evidence="3 4 5">Member of the two-component regulatory system SenX3/RegX3 involved in stress response (PubMed:17526710, PubMed:18083811, PubMed:22956756). The system is involved in phosphate starvation response (PubMed:17526710). Once phosphorylated by SenX3, activates the expression of the alkaline phosphatase phoA, the high-affinity phosphate transporter pstSCAB, phnDCE, phnF and senX3 (PubMed:17526710, PubMed:18083811). May act as a negative regulator of NhaA (PubMed:22956756). Acts by binding to a DNA motif consisting of an inverted repeat (PubMed:17526710).</text>
</comment>
<comment type="induction">
    <text evidence="4">By phosphate-limiting growth conditions.</text>
</comment>
<comment type="PTM">
    <text evidence="3">Phosphorylated by SenX3.</text>
</comment>
<comment type="disruption phenotype">
    <text evidence="3 5">RegX3 cannot be deleted alone (PubMed:17526710). However, the deletion of the senX3-regX3 operon is possible, possibly due to the accumulation of compensatory mutations (PubMed:22956756). SenX3-regX3 deletion mutant is more sensitive to phosphate limitation, showing a reduced ability to grow at lower phosphate concentrations (PubMed:22956756). The M.tuberculosis operon can functionally complement the growth phenotype in M.smegmatis under phosphate-replete conditions, but not under low phosphate conditions (PubMed:22956756).</text>
</comment>
<name>REGX3_MYCS2</name>
<sequence length="228" mass="24911">MTSVLIVEDEESLADPLAFLLRKEGFEATVVGDGPSALAEFERSGADIVLLDLMLPGMSGTDVCKQLRARSSVPVIMVTARDSEIDKVVGLELGADDYVTKPYSARELIARIRAVLRRGADNDDAGADDGVLEAGPVRMDVERHVVSVNGEPITLPLKEFDLLEYLMRNSGRVLTRGQLIDRVWGADYVGDTKTLDVHVKRLRSKIEEDPANPVHLVTVRGLGYKLEG</sequence>